<sequence length="110" mass="12384">MSATLQASSTTKDSPISETEFATLIDNEKDKLTDTHEFIRSITNQLSVKSSKFKFLVEVTSVSSSESITTNVTITSSIGSLWDDERDGYYSFKVQTKDVYLVTVYWIYAD</sequence>
<reference key="1">
    <citation type="journal article" date="2009" name="Nature">
        <title>Evolution of pathogenicity and sexual reproduction in eight Candida genomes.</title>
        <authorList>
            <person name="Butler G."/>
            <person name="Rasmussen M.D."/>
            <person name="Lin M.F."/>
            <person name="Santos M.A.S."/>
            <person name="Sakthikumar S."/>
            <person name="Munro C.A."/>
            <person name="Rheinbay E."/>
            <person name="Grabherr M."/>
            <person name="Forche A."/>
            <person name="Reedy J.L."/>
            <person name="Agrafioti I."/>
            <person name="Arnaud M.B."/>
            <person name="Bates S."/>
            <person name="Brown A.J.P."/>
            <person name="Brunke S."/>
            <person name="Costanzo M.C."/>
            <person name="Fitzpatrick D.A."/>
            <person name="de Groot P.W.J."/>
            <person name="Harris D."/>
            <person name="Hoyer L.L."/>
            <person name="Hube B."/>
            <person name="Klis F.M."/>
            <person name="Kodira C."/>
            <person name="Lennard N."/>
            <person name="Logue M.E."/>
            <person name="Martin R."/>
            <person name="Neiman A.M."/>
            <person name="Nikolaou E."/>
            <person name="Quail M.A."/>
            <person name="Quinn J."/>
            <person name="Santos M.C."/>
            <person name="Schmitzberger F.F."/>
            <person name="Sherlock G."/>
            <person name="Shah P."/>
            <person name="Silverstein K.A.T."/>
            <person name="Skrzypek M.S."/>
            <person name="Soll D."/>
            <person name="Staggs R."/>
            <person name="Stansfield I."/>
            <person name="Stumpf M.P.H."/>
            <person name="Sudbery P.E."/>
            <person name="Srikantha T."/>
            <person name="Zeng Q."/>
            <person name="Berman J."/>
            <person name="Berriman M."/>
            <person name="Heitman J."/>
            <person name="Gow N.A.R."/>
            <person name="Lorenz M.C."/>
            <person name="Birren B.W."/>
            <person name="Kellis M."/>
            <person name="Cuomo C.A."/>
        </authorList>
    </citation>
    <scope>NUCLEOTIDE SEQUENCE [LARGE SCALE GENOMIC DNA]</scope>
    <source>
        <strain>ATCC 42720</strain>
    </source>
</reference>
<dbReference type="EMBL" id="CH408080">
    <property type="protein sequence ID" value="EEQ40405.1"/>
    <property type="molecule type" value="Genomic_DNA"/>
</dbReference>
<dbReference type="RefSeq" id="XP_002615651.1">
    <property type="nucleotide sequence ID" value="XM_002615605.1"/>
</dbReference>
<dbReference type="SMR" id="C4Y8K5"/>
<dbReference type="FunCoup" id="C4Y8K5">
    <property type="interactions" value="36"/>
</dbReference>
<dbReference type="GeneID" id="8496063"/>
<dbReference type="KEGG" id="clu:CLUG_04533"/>
<dbReference type="VEuPathDB" id="FungiDB:CLUG_04533"/>
<dbReference type="HOGENOM" id="CLU_137494_0_0_1"/>
<dbReference type="InParanoid" id="C4Y8K5"/>
<dbReference type="OrthoDB" id="106659at4891"/>
<dbReference type="Proteomes" id="UP000007703">
    <property type="component" value="Unassembled WGS sequence"/>
</dbReference>
<dbReference type="GO" id="GO:0042995">
    <property type="term" value="C:cell projection"/>
    <property type="evidence" value="ECO:0007669"/>
    <property type="project" value="UniProtKB-SubCell"/>
</dbReference>
<dbReference type="GO" id="GO:0005737">
    <property type="term" value="C:cytoplasm"/>
    <property type="evidence" value="ECO:0007669"/>
    <property type="project" value="UniProtKB-SubCell"/>
</dbReference>
<dbReference type="CDD" id="cd21457">
    <property type="entry name" value="DLC-like_TDA2"/>
    <property type="match status" value="1"/>
</dbReference>
<dbReference type="Gene3D" id="3.30.1140.40">
    <property type="entry name" value="Tctex-1"/>
    <property type="match status" value="1"/>
</dbReference>
<dbReference type="InterPro" id="IPR005334">
    <property type="entry name" value="Tctex-1-like"/>
</dbReference>
<dbReference type="InterPro" id="IPR038586">
    <property type="entry name" value="Tctex-1-like_sf"/>
</dbReference>
<dbReference type="Pfam" id="PF03645">
    <property type="entry name" value="Tctex-1"/>
    <property type="match status" value="1"/>
</dbReference>
<name>TDA2_CLAL4</name>
<comment type="subcellular location">
    <subcellularLocation>
        <location evidence="1">Cytoplasm</location>
    </subcellularLocation>
    <subcellularLocation>
        <location evidence="1">Cell projection</location>
    </subcellularLocation>
    <text evidence="1">Concentrates at cytoplasmic punctate structures and localizes at the mating projection tip.</text>
</comment>
<comment type="similarity">
    <text evidence="2">Belongs to the TDA2 family.</text>
</comment>
<feature type="chain" id="PRO_0000410730" description="Topoisomerase I damage affected protein 2">
    <location>
        <begin position="1"/>
        <end position="110"/>
    </location>
</feature>
<keyword id="KW-0966">Cell projection</keyword>
<keyword id="KW-0963">Cytoplasm</keyword>
<keyword id="KW-1185">Reference proteome</keyword>
<organism>
    <name type="scientific">Clavispora lusitaniae (strain ATCC 42720)</name>
    <name type="common">Yeast</name>
    <name type="synonym">Candida lusitaniae</name>
    <dbReference type="NCBI Taxonomy" id="306902"/>
    <lineage>
        <taxon>Eukaryota</taxon>
        <taxon>Fungi</taxon>
        <taxon>Dikarya</taxon>
        <taxon>Ascomycota</taxon>
        <taxon>Saccharomycotina</taxon>
        <taxon>Pichiomycetes</taxon>
        <taxon>Metschnikowiaceae</taxon>
        <taxon>Clavispora</taxon>
    </lineage>
</organism>
<protein>
    <recommendedName>
        <fullName>Topoisomerase I damage affected protein 2</fullName>
    </recommendedName>
</protein>
<evidence type="ECO:0000250" key="1">
    <source>
        <dbReference type="UniProtKB" id="P40045"/>
    </source>
</evidence>
<evidence type="ECO:0000305" key="2"/>
<proteinExistence type="inferred from homology"/>
<accession>C4Y8K5</accession>
<gene>
    <name type="primary">TDA2</name>
    <name type="ORF">CLUG_04533</name>
</gene>